<accession>Q2QDA3</accession>
<accession>A5J1R9</accession>
<accession>Q4VZP8</accession>
<organism>
    <name type="scientific">Cucumis sativus</name>
    <name type="common">Cucumber</name>
    <dbReference type="NCBI Taxonomy" id="3659"/>
    <lineage>
        <taxon>Eukaryota</taxon>
        <taxon>Viridiplantae</taxon>
        <taxon>Streptophyta</taxon>
        <taxon>Embryophyta</taxon>
        <taxon>Tracheophyta</taxon>
        <taxon>Spermatophyta</taxon>
        <taxon>Magnoliopsida</taxon>
        <taxon>eudicotyledons</taxon>
        <taxon>Gunneridae</taxon>
        <taxon>Pentapetalae</taxon>
        <taxon>rosids</taxon>
        <taxon>fabids</taxon>
        <taxon>Cucurbitales</taxon>
        <taxon>Cucurbitaceae</taxon>
        <taxon>Benincaseae</taxon>
        <taxon>Cucumis</taxon>
    </lineage>
</organism>
<name>ATPA_CUCSA</name>
<comment type="function">
    <text evidence="1">Produces ATP from ADP in the presence of a proton gradient across the membrane. The alpha chain is a regulatory subunit.</text>
</comment>
<comment type="catalytic activity">
    <reaction evidence="1">
        <text>ATP + H2O + 4 H(+)(in) = ADP + phosphate + 5 H(+)(out)</text>
        <dbReference type="Rhea" id="RHEA:57720"/>
        <dbReference type="ChEBI" id="CHEBI:15377"/>
        <dbReference type="ChEBI" id="CHEBI:15378"/>
        <dbReference type="ChEBI" id="CHEBI:30616"/>
        <dbReference type="ChEBI" id="CHEBI:43474"/>
        <dbReference type="ChEBI" id="CHEBI:456216"/>
        <dbReference type="EC" id="7.1.2.2"/>
    </reaction>
</comment>
<comment type="subunit">
    <text evidence="1">F-type ATPases have 2 components, CF(1) - the catalytic core - and CF(0) - the membrane proton channel. CF(1) has five subunits: alpha(3), beta(3), gamma(1), delta(1), epsilon(1). CF(0) has four main subunits: a, b, b' and c.</text>
</comment>
<comment type="subcellular location">
    <subcellularLocation>
        <location evidence="1">Plastid</location>
        <location evidence="1">Chloroplast thylakoid membrane</location>
        <topology evidence="1">Peripheral membrane protein</topology>
    </subcellularLocation>
</comment>
<comment type="similarity">
    <text evidence="1">Belongs to the ATPase alpha/beta chains family.</text>
</comment>
<feature type="chain" id="PRO_0000238418" description="ATP synthase subunit alpha, chloroplastic">
    <location>
        <begin position="1"/>
        <end position="507"/>
    </location>
</feature>
<feature type="binding site" evidence="1">
    <location>
        <begin position="170"/>
        <end position="177"/>
    </location>
    <ligand>
        <name>ATP</name>
        <dbReference type="ChEBI" id="CHEBI:30616"/>
    </ligand>
</feature>
<feature type="site" description="Required for activity" evidence="1">
    <location>
        <position position="363"/>
    </location>
</feature>
<feature type="sequence conflict" description="In Ref. 2; CAJ00743." evidence="2" ref="2">
    <original>A</original>
    <variation>V</variation>
    <location>
        <position position="96"/>
    </location>
</feature>
<feature type="sequence conflict" description="In Ref. 2; CAJ00743." evidence="2" ref="2">
    <original>LAEYFMYRKQHTSI</original>
    <variation>WLNILCTENSTLH</variation>
    <location>
        <begin position="246"/>
        <end position="259"/>
    </location>
</feature>
<sequence length="507" mass="55382">METIRADEISNIIRERIEQYTREVKIVNTGTVLQVGDGIARIYGLDEVMAGELVEFEEGTIGIALNLESNNVGVVLMGDGLLIQEGSSVKATGRIAQIPVSEAYLGRVINALAKPIDGRGEISSSDSRLIESPAPGIILRRSVYEPLQTGLIAIDSMIPIGRGQRELIIGDRQTGKTAVATDTILNQQGQNVICVYVAIGQKASSVAQVVSTLQERGAMEYTIIVAETADSPATLQYLAPYTGAALAEYFMYRKQHTSIIYDDPSKQAQAYRQMSLLLRRPPGREAYPGDVFYLHSRLLERAAKLSSALGEGSMTALPIVETQSGDVSAYIPTNVISITDGQIFLSADLFNAGIRPAINVGISVSRVGSAAQIKAMKQVAGKLKLELAQFAELEAFAQFASDLDKATQNQLARGQRLRELLKQSQSAPLTVDEQIMTVYTGTNGYLDSLEIAQVRKFLVELRTYVKTNKPQFQEIISSTKTFTPEAEVLLKEAIQEQMERFLLQDQV</sequence>
<evidence type="ECO:0000255" key="1">
    <source>
        <dbReference type="HAMAP-Rule" id="MF_01346"/>
    </source>
</evidence>
<evidence type="ECO:0000305" key="2"/>
<dbReference type="EC" id="7.1.2.2" evidence="1"/>
<dbReference type="EMBL" id="DQ119058">
    <property type="protein sequence ID" value="AAZ94637.1"/>
    <property type="molecule type" value="Genomic_DNA"/>
</dbReference>
<dbReference type="EMBL" id="AJ970307">
    <property type="protein sequence ID" value="CAJ00743.1"/>
    <property type="molecule type" value="Genomic_DNA"/>
</dbReference>
<dbReference type="EMBL" id="DQ865975">
    <property type="protein sequence ID" value="ABI97402.1"/>
    <property type="molecule type" value="Genomic_DNA"/>
</dbReference>
<dbReference type="EMBL" id="DQ865976">
    <property type="protein sequence ID" value="ABI98730.1"/>
    <property type="molecule type" value="Genomic_DNA"/>
</dbReference>
<dbReference type="RefSeq" id="YP_247584.1">
    <property type="nucleotide sequence ID" value="NC_007144.1"/>
</dbReference>
<dbReference type="SMR" id="Q2QDA3"/>
<dbReference type="GeneID" id="3429374"/>
<dbReference type="KEGG" id="csv:3429374"/>
<dbReference type="OrthoDB" id="9805536at2759"/>
<dbReference type="GO" id="GO:0009535">
    <property type="term" value="C:chloroplast thylakoid membrane"/>
    <property type="evidence" value="ECO:0007669"/>
    <property type="project" value="UniProtKB-SubCell"/>
</dbReference>
<dbReference type="GO" id="GO:0045259">
    <property type="term" value="C:proton-transporting ATP synthase complex"/>
    <property type="evidence" value="ECO:0007669"/>
    <property type="project" value="UniProtKB-KW"/>
</dbReference>
<dbReference type="GO" id="GO:0005524">
    <property type="term" value="F:ATP binding"/>
    <property type="evidence" value="ECO:0007669"/>
    <property type="project" value="UniProtKB-UniRule"/>
</dbReference>
<dbReference type="GO" id="GO:0046933">
    <property type="term" value="F:proton-transporting ATP synthase activity, rotational mechanism"/>
    <property type="evidence" value="ECO:0007669"/>
    <property type="project" value="UniProtKB-UniRule"/>
</dbReference>
<dbReference type="CDD" id="cd18113">
    <property type="entry name" value="ATP-synt_F1_alpha_C"/>
    <property type="match status" value="1"/>
</dbReference>
<dbReference type="CDD" id="cd18116">
    <property type="entry name" value="ATP-synt_F1_alpha_N"/>
    <property type="match status" value="1"/>
</dbReference>
<dbReference type="CDD" id="cd01132">
    <property type="entry name" value="F1-ATPase_alpha_CD"/>
    <property type="match status" value="1"/>
</dbReference>
<dbReference type="FunFam" id="1.20.150.20:FF:000001">
    <property type="entry name" value="ATP synthase subunit alpha"/>
    <property type="match status" value="1"/>
</dbReference>
<dbReference type="FunFam" id="2.40.30.20:FF:000001">
    <property type="entry name" value="ATP synthase subunit alpha"/>
    <property type="match status" value="1"/>
</dbReference>
<dbReference type="FunFam" id="3.40.50.300:FF:000002">
    <property type="entry name" value="ATP synthase subunit alpha"/>
    <property type="match status" value="1"/>
</dbReference>
<dbReference type="Gene3D" id="2.40.30.20">
    <property type="match status" value="1"/>
</dbReference>
<dbReference type="Gene3D" id="1.20.150.20">
    <property type="entry name" value="ATP synthase alpha/beta chain, C-terminal domain"/>
    <property type="match status" value="1"/>
</dbReference>
<dbReference type="Gene3D" id="3.40.50.300">
    <property type="entry name" value="P-loop containing nucleotide triphosphate hydrolases"/>
    <property type="match status" value="1"/>
</dbReference>
<dbReference type="HAMAP" id="MF_01346">
    <property type="entry name" value="ATP_synth_alpha_bact"/>
    <property type="match status" value="1"/>
</dbReference>
<dbReference type="InterPro" id="IPR023366">
    <property type="entry name" value="ATP_synth_asu-like_sf"/>
</dbReference>
<dbReference type="InterPro" id="IPR000793">
    <property type="entry name" value="ATP_synth_asu_C"/>
</dbReference>
<dbReference type="InterPro" id="IPR038376">
    <property type="entry name" value="ATP_synth_asu_C_sf"/>
</dbReference>
<dbReference type="InterPro" id="IPR033732">
    <property type="entry name" value="ATP_synth_F1_a_nt-bd_dom"/>
</dbReference>
<dbReference type="InterPro" id="IPR005294">
    <property type="entry name" value="ATP_synth_F1_asu"/>
</dbReference>
<dbReference type="InterPro" id="IPR020003">
    <property type="entry name" value="ATPase_a/bsu_AS"/>
</dbReference>
<dbReference type="InterPro" id="IPR004100">
    <property type="entry name" value="ATPase_F1/V1/A1_a/bsu_N"/>
</dbReference>
<dbReference type="InterPro" id="IPR036121">
    <property type="entry name" value="ATPase_F1/V1/A1_a/bsu_N_sf"/>
</dbReference>
<dbReference type="InterPro" id="IPR000194">
    <property type="entry name" value="ATPase_F1/V1/A1_a/bsu_nucl-bd"/>
</dbReference>
<dbReference type="InterPro" id="IPR027417">
    <property type="entry name" value="P-loop_NTPase"/>
</dbReference>
<dbReference type="NCBIfam" id="TIGR00962">
    <property type="entry name" value="atpA"/>
    <property type="match status" value="1"/>
</dbReference>
<dbReference type="NCBIfam" id="NF009884">
    <property type="entry name" value="PRK13343.1"/>
    <property type="match status" value="1"/>
</dbReference>
<dbReference type="PANTHER" id="PTHR48082">
    <property type="entry name" value="ATP SYNTHASE SUBUNIT ALPHA, MITOCHONDRIAL"/>
    <property type="match status" value="1"/>
</dbReference>
<dbReference type="PANTHER" id="PTHR48082:SF2">
    <property type="entry name" value="ATP SYNTHASE SUBUNIT ALPHA, MITOCHONDRIAL"/>
    <property type="match status" value="1"/>
</dbReference>
<dbReference type="Pfam" id="PF00006">
    <property type="entry name" value="ATP-synt_ab"/>
    <property type="match status" value="1"/>
</dbReference>
<dbReference type="Pfam" id="PF00306">
    <property type="entry name" value="ATP-synt_ab_C"/>
    <property type="match status" value="1"/>
</dbReference>
<dbReference type="Pfam" id="PF02874">
    <property type="entry name" value="ATP-synt_ab_N"/>
    <property type="match status" value="1"/>
</dbReference>
<dbReference type="PIRSF" id="PIRSF039088">
    <property type="entry name" value="F_ATPase_subunit_alpha"/>
    <property type="match status" value="1"/>
</dbReference>
<dbReference type="SUPFAM" id="SSF47917">
    <property type="entry name" value="C-terminal domain of alpha and beta subunits of F1 ATP synthase"/>
    <property type="match status" value="1"/>
</dbReference>
<dbReference type="SUPFAM" id="SSF50615">
    <property type="entry name" value="N-terminal domain of alpha and beta subunits of F1 ATP synthase"/>
    <property type="match status" value="1"/>
</dbReference>
<dbReference type="SUPFAM" id="SSF52540">
    <property type="entry name" value="P-loop containing nucleoside triphosphate hydrolases"/>
    <property type="match status" value="1"/>
</dbReference>
<dbReference type="PROSITE" id="PS00152">
    <property type="entry name" value="ATPASE_ALPHA_BETA"/>
    <property type="match status" value="1"/>
</dbReference>
<gene>
    <name evidence="1" type="primary">atpA</name>
    <name type="ordered locus">CsCp011</name>
</gene>
<protein>
    <recommendedName>
        <fullName evidence="1">ATP synthase subunit alpha, chloroplastic</fullName>
        <ecNumber evidence="1">7.1.2.2</ecNumber>
    </recommendedName>
    <alternativeName>
        <fullName evidence="1">ATP synthase F1 sector subunit alpha</fullName>
    </alternativeName>
    <alternativeName>
        <fullName evidence="1">F-ATPase subunit alpha</fullName>
    </alternativeName>
</protein>
<keyword id="KW-0066">ATP synthesis</keyword>
<keyword id="KW-0067">ATP-binding</keyword>
<keyword id="KW-0139">CF(1)</keyword>
<keyword id="KW-0150">Chloroplast</keyword>
<keyword id="KW-0375">Hydrogen ion transport</keyword>
<keyword id="KW-0406">Ion transport</keyword>
<keyword id="KW-0472">Membrane</keyword>
<keyword id="KW-0547">Nucleotide-binding</keyword>
<keyword id="KW-0934">Plastid</keyword>
<keyword id="KW-0793">Thylakoid</keyword>
<keyword id="KW-1278">Translocase</keyword>
<keyword id="KW-0813">Transport</keyword>
<geneLocation type="chloroplast"/>
<reference key="1">
    <citation type="journal article" date="2006" name="Plant Cell Rep.">
        <title>Complete sequence and organization of the cucumber (Cucumis sativus L. cv. Baekmibaekdadagi) chloroplast genome.</title>
        <authorList>
            <person name="Kim J.-S."/>
            <person name="Jung J.D."/>
            <person name="Lee J.-A."/>
            <person name="Park H.-W."/>
            <person name="Oh K.-H."/>
            <person name="Jeong W.J."/>
            <person name="Choi D.-W."/>
            <person name="Liu J.R."/>
            <person name="Cho K.Y."/>
        </authorList>
    </citation>
    <scope>NUCLEOTIDE SEQUENCE [LARGE SCALE GENOMIC DNA]</scope>
    <source>
        <strain>cv. Baekmibaekdadagi</strain>
    </source>
</reference>
<reference key="2">
    <citation type="journal article" date="2007" name="Cell. Mol. Biol. Lett.">
        <title>The complete structure of the cucumber (Cucumis sativus L.) chloroplast genome: its composition and comparative analysis.</title>
        <authorList>
            <person name="Plader W.W."/>
            <person name="Yukawa Y."/>
            <person name="Sugiura M."/>
            <person name="Malepszy S."/>
        </authorList>
    </citation>
    <scope>NUCLEOTIDE SEQUENCE [LARGE SCALE GENOMIC DNA]</scope>
    <source>
        <strain>cv. Borszczagowski</strain>
    </source>
</reference>
<reference key="3">
    <citation type="journal article" date="2007" name="Genome">
        <title>Sequencing cucumber (Cucumis sativus L.) chloroplast genomes identifies differences between chilling-tolerant and -susceptible cucumber lines.</title>
        <authorList>
            <person name="Chung S.-M."/>
            <person name="Gordon V.S."/>
            <person name="Staub J.E."/>
        </authorList>
    </citation>
    <scope>NUCLEOTIDE SEQUENCE [LARGE SCALE GENOMIC DNA]</scope>
    <source>
        <strain>cv. Chipper</strain>
        <strain>cv. Gy14</strain>
    </source>
</reference>
<proteinExistence type="inferred from homology"/>